<gene>
    <name evidence="1" type="primary">rsmA</name>
    <name evidence="1" type="synonym">ksgA</name>
    <name type="ordered locus">PERMA_0520</name>
</gene>
<comment type="function">
    <text evidence="1">Specifically dimethylates two adjacent adenosines (A1518 and A1519) in the loop of a conserved hairpin near the 3'-end of 16S rRNA in the 30S particle. May play a critical role in biogenesis of 30S subunits.</text>
</comment>
<comment type="catalytic activity">
    <reaction evidence="1">
        <text>adenosine(1518)/adenosine(1519) in 16S rRNA + 4 S-adenosyl-L-methionine = N(6)-dimethyladenosine(1518)/N(6)-dimethyladenosine(1519) in 16S rRNA + 4 S-adenosyl-L-homocysteine + 4 H(+)</text>
        <dbReference type="Rhea" id="RHEA:19609"/>
        <dbReference type="Rhea" id="RHEA-COMP:10232"/>
        <dbReference type="Rhea" id="RHEA-COMP:10233"/>
        <dbReference type="ChEBI" id="CHEBI:15378"/>
        <dbReference type="ChEBI" id="CHEBI:57856"/>
        <dbReference type="ChEBI" id="CHEBI:59789"/>
        <dbReference type="ChEBI" id="CHEBI:74411"/>
        <dbReference type="ChEBI" id="CHEBI:74493"/>
        <dbReference type="EC" id="2.1.1.182"/>
    </reaction>
</comment>
<comment type="subcellular location">
    <subcellularLocation>
        <location evidence="1">Cytoplasm</location>
    </subcellularLocation>
</comment>
<comment type="similarity">
    <text evidence="1">Belongs to the class I-like SAM-binding methyltransferase superfamily. rRNA adenine N(6)-methyltransferase family. RsmA subfamily.</text>
</comment>
<reference key="1">
    <citation type="journal article" date="2009" name="J. Bacteriol.">
        <title>Complete and draft genome sequences of six members of the Aquificales.</title>
        <authorList>
            <person name="Reysenbach A.-L."/>
            <person name="Hamamura N."/>
            <person name="Podar M."/>
            <person name="Griffiths E."/>
            <person name="Ferreira S."/>
            <person name="Hochstein R."/>
            <person name="Heidelberg J."/>
            <person name="Johnson J."/>
            <person name="Mead D."/>
            <person name="Pohorille A."/>
            <person name="Sarmiento M."/>
            <person name="Schweighofer K."/>
            <person name="Seshadri R."/>
            <person name="Voytek M.A."/>
        </authorList>
    </citation>
    <scope>NUCLEOTIDE SEQUENCE [LARGE SCALE GENOMIC DNA]</scope>
    <source>
        <strain>DSM 14350 / EX-H1</strain>
    </source>
</reference>
<evidence type="ECO:0000255" key="1">
    <source>
        <dbReference type="HAMAP-Rule" id="MF_00607"/>
    </source>
</evidence>
<proteinExistence type="inferred from homology"/>
<accession>C0QUE5</accession>
<keyword id="KW-0963">Cytoplasm</keyword>
<keyword id="KW-0489">Methyltransferase</keyword>
<keyword id="KW-1185">Reference proteome</keyword>
<keyword id="KW-0694">RNA-binding</keyword>
<keyword id="KW-0698">rRNA processing</keyword>
<keyword id="KW-0949">S-adenosyl-L-methionine</keyword>
<keyword id="KW-0808">Transferase</keyword>
<feature type="chain" id="PRO_1000194393" description="Ribosomal RNA small subunit methyltransferase A">
    <location>
        <begin position="1"/>
        <end position="265"/>
    </location>
</feature>
<feature type="binding site" evidence="1">
    <location>
        <position position="13"/>
    </location>
    <ligand>
        <name>S-adenosyl-L-methionine</name>
        <dbReference type="ChEBI" id="CHEBI:59789"/>
    </ligand>
</feature>
<feature type="binding site" evidence="1">
    <location>
        <position position="15"/>
    </location>
    <ligand>
        <name>S-adenosyl-L-methionine</name>
        <dbReference type="ChEBI" id="CHEBI:59789"/>
    </ligand>
</feature>
<feature type="binding site" evidence="1">
    <location>
        <position position="40"/>
    </location>
    <ligand>
        <name>S-adenosyl-L-methionine</name>
        <dbReference type="ChEBI" id="CHEBI:59789"/>
    </ligand>
</feature>
<feature type="binding site" evidence="1">
    <location>
        <position position="62"/>
    </location>
    <ligand>
        <name>S-adenosyl-L-methionine</name>
        <dbReference type="ChEBI" id="CHEBI:59789"/>
    </ligand>
</feature>
<feature type="binding site" evidence="1">
    <location>
        <position position="87"/>
    </location>
    <ligand>
        <name>S-adenosyl-L-methionine</name>
        <dbReference type="ChEBI" id="CHEBI:59789"/>
    </ligand>
</feature>
<feature type="binding site" evidence="1">
    <location>
        <position position="106"/>
    </location>
    <ligand>
        <name>S-adenosyl-L-methionine</name>
        <dbReference type="ChEBI" id="CHEBI:59789"/>
    </ligand>
</feature>
<protein>
    <recommendedName>
        <fullName evidence="1">Ribosomal RNA small subunit methyltransferase A</fullName>
        <ecNumber evidence="1">2.1.1.182</ecNumber>
    </recommendedName>
    <alternativeName>
        <fullName evidence="1">16S rRNA (adenine(1518)-N(6)/adenine(1519)-N(6))-dimethyltransferase</fullName>
    </alternativeName>
    <alternativeName>
        <fullName evidence="1">16S rRNA dimethyladenosine transferase</fullName>
    </alternativeName>
    <alternativeName>
        <fullName evidence="1">16S rRNA dimethylase</fullName>
    </alternativeName>
    <alternativeName>
        <fullName evidence="1">S-adenosylmethionine-6-N', N'-adenosyl(rRNA) dimethyltransferase</fullName>
    </alternativeName>
</protein>
<name>RSMA_PERMH</name>
<dbReference type="EC" id="2.1.1.182" evidence="1"/>
<dbReference type="EMBL" id="CP001230">
    <property type="protein sequence ID" value="ACO03498.1"/>
    <property type="molecule type" value="Genomic_DNA"/>
</dbReference>
<dbReference type="RefSeq" id="WP_012675737.1">
    <property type="nucleotide sequence ID" value="NC_012440.1"/>
</dbReference>
<dbReference type="SMR" id="C0QUE5"/>
<dbReference type="STRING" id="123214.PERMA_0520"/>
<dbReference type="PaxDb" id="123214-PERMA_0520"/>
<dbReference type="KEGG" id="pmx:PERMA_0520"/>
<dbReference type="eggNOG" id="COG0030">
    <property type="taxonomic scope" value="Bacteria"/>
</dbReference>
<dbReference type="HOGENOM" id="CLU_041220_0_2_0"/>
<dbReference type="OrthoDB" id="9814755at2"/>
<dbReference type="Proteomes" id="UP000001366">
    <property type="component" value="Chromosome"/>
</dbReference>
<dbReference type="GO" id="GO:0005829">
    <property type="term" value="C:cytosol"/>
    <property type="evidence" value="ECO:0007669"/>
    <property type="project" value="TreeGrafter"/>
</dbReference>
<dbReference type="GO" id="GO:0052908">
    <property type="term" value="F:16S rRNA (adenine(1518)-N(6)/adenine(1519)-N(6))-dimethyltransferase activity"/>
    <property type="evidence" value="ECO:0007669"/>
    <property type="project" value="UniProtKB-EC"/>
</dbReference>
<dbReference type="GO" id="GO:0003723">
    <property type="term" value="F:RNA binding"/>
    <property type="evidence" value="ECO:0007669"/>
    <property type="project" value="UniProtKB-KW"/>
</dbReference>
<dbReference type="CDD" id="cd02440">
    <property type="entry name" value="AdoMet_MTases"/>
    <property type="match status" value="1"/>
</dbReference>
<dbReference type="Gene3D" id="1.10.8.100">
    <property type="entry name" value="Ribosomal RNA adenine dimethylase-like, domain 2"/>
    <property type="match status" value="1"/>
</dbReference>
<dbReference type="Gene3D" id="3.40.50.150">
    <property type="entry name" value="Vaccinia Virus protein VP39"/>
    <property type="match status" value="1"/>
</dbReference>
<dbReference type="HAMAP" id="MF_00607">
    <property type="entry name" value="16SrRNA_methyltr_A"/>
    <property type="match status" value="1"/>
</dbReference>
<dbReference type="InterPro" id="IPR001737">
    <property type="entry name" value="KsgA/Erm"/>
</dbReference>
<dbReference type="InterPro" id="IPR023165">
    <property type="entry name" value="rRNA_Ade_diMease-like_C"/>
</dbReference>
<dbReference type="InterPro" id="IPR020596">
    <property type="entry name" value="rRNA_Ade_Mease_Trfase_CS"/>
</dbReference>
<dbReference type="InterPro" id="IPR020598">
    <property type="entry name" value="rRNA_Ade_methylase_Trfase_N"/>
</dbReference>
<dbReference type="InterPro" id="IPR011530">
    <property type="entry name" value="rRNA_adenine_dimethylase"/>
</dbReference>
<dbReference type="InterPro" id="IPR029063">
    <property type="entry name" value="SAM-dependent_MTases_sf"/>
</dbReference>
<dbReference type="NCBIfam" id="TIGR00755">
    <property type="entry name" value="ksgA"/>
    <property type="match status" value="1"/>
</dbReference>
<dbReference type="PANTHER" id="PTHR11727">
    <property type="entry name" value="DIMETHYLADENOSINE TRANSFERASE"/>
    <property type="match status" value="1"/>
</dbReference>
<dbReference type="PANTHER" id="PTHR11727:SF7">
    <property type="entry name" value="DIMETHYLADENOSINE TRANSFERASE-RELATED"/>
    <property type="match status" value="1"/>
</dbReference>
<dbReference type="Pfam" id="PF00398">
    <property type="entry name" value="RrnaAD"/>
    <property type="match status" value="1"/>
</dbReference>
<dbReference type="SMART" id="SM00650">
    <property type="entry name" value="rADc"/>
    <property type="match status" value="1"/>
</dbReference>
<dbReference type="SUPFAM" id="SSF53335">
    <property type="entry name" value="S-adenosyl-L-methionine-dependent methyltransferases"/>
    <property type="match status" value="1"/>
</dbReference>
<dbReference type="PROSITE" id="PS01131">
    <property type="entry name" value="RRNA_A_DIMETH"/>
    <property type="match status" value="1"/>
</dbReference>
<dbReference type="PROSITE" id="PS51689">
    <property type="entry name" value="SAM_RNA_A_N6_MT"/>
    <property type="match status" value="1"/>
</dbReference>
<organism>
    <name type="scientific">Persephonella marina (strain DSM 14350 / EX-H1)</name>
    <dbReference type="NCBI Taxonomy" id="123214"/>
    <lineage>
        <taxon>Bacteria</taxon>
        <taxon>Pseudomonadati</taxon>
        <taxon>Aquificota</taxon>
        <taxon>Aquificia</taxon>
        <taxon>Aquificales</taxon>
        <taxon>Hydrogenothermaceae</taxon>
        <taxon>Persephonella</taxon>
    </lineage>
</organism>
<sequence length="265" mass="30742">MGNFRPKKRFGQHLLISKGVIQKIVECLDIKEDDTVVEIGVGTGQLTEEILRRNPKIVYGIEIDKTVYPIIEERFKDFKNFVLIKEDFFDVDLRKLTDGKIKLTGNLPYNVASHILVNTAFYIDILQLAVFMIQKEVAQKLVGKPKTKDYTFMSVFLQTFFDIDYVMSVPARFFSPPPKVTSAVIRMIPKEKLPVSLDHMKKYKNFVSMLFSNRRKMLRSKIDKDILERAGIDPKARAEELSVDDFIRLFSEHLLYKHDGKNENS</sequence>